<name>SYT_MYCA9</name>
<reference key="1">
    <citation type="journal article" date="2009" name="PLoS ONE">
        <title>Non mycobacterial virulence genes in the genome of the emerging pathogen Mycobacterium abscessus.</title>
        <authorList>
            <person name="Ripoll F."/>
            <person name="Pasek S."/>
            <person name="Schenowitz C."/>
            <person name="Dossat C."/>
            <person name="Barbe V."/>
            <person name="Rottman M."/>
            <person name="Macheras E."/>
            <person name="Heym B."/>
            <person name="Herrmann J.L."/>
            <person name="Daffe M."/>
            <person name="Brosch R."/>
            <person name="Risler J.L."/>
            <person name="Gaillard J.L."/>
        </authorList>
    </citation>
    <scope>NUCLEOTIDE SEQUENCE [LARGE SCALE GENOMIC DNA]</scope>
    <source>
        <strain>ATCC 19977 / DSM 44196 / CCUG 20993 / CIP 104536 / JCM 13569 / NCTC 13031 / TMC 1543 / L948</strain>
    </source>
</reference>
<dbReference type="EC" id="6.1.1.3" evidence="1"/>
<dbReference type="EMBL" id="CU458896">
    <property type="protein sequence ID" value="CAM62977.1"/>
    <property type="molecule type" value="Genomic_DNA"/>
</dbReference>
<dbReference type="RefSeq" id="WP_005082399.1">
    <property type="nucleotide sequence ID" value="NZ_MLCG01000003.1"/>
</dbReference>
<dbReference type="SMR" id="B1MCK6"/>
<dbReference type="GeneID" id="93379829"/>
<dbReference type="KEGG" id="mab:MAB_2898c"/>
<dbReference type="Proteomes" id="UP000007137">
    <property type="component" value="Chromosome"/>
</dbReference>
<dbReference type="GO" id="GO:0005737">
    <property type="term" value="C:cytoplasm"/>
    <property type="evidence" value="ECO:0007669"/>
    <property type="project" value="UniProtKB-SubCell"/>
</dbReference>
<dbReference type="GO" id="GO:0005524">
    <property type="term" value="F:ATP binding"/>
    <property type="evidence" value="ECO:0007669"/>
    <property type="project" value="UniProtKB-UniRule"/>
</dbReference>
<dbReference type="GO" id="GO:0046872">
    <property type="term" value="F:metal ion binding"/>
    <property type="evidence" value="ECO:0007669"/>
    <property type="project" value="UniProtKB-KW"/>
</dbReference>
<dbReference type="GO" id="GO:0004829">
    <property type="term" value="F:threonine-tRNA ligase activity"/>
    <property type="evidence" value="ECO:0007669"/>
    <property type="project" value="UniProtKB-UniRule"/>
</dbReference>
<dbReference type="GO" id="GO:0000049">
    <property type="term" value="F:tRNA binding"/>
    <property type="evidence" value="ECO:0007669"/>
    <property type="project" value="UniProtKB-KW"/>
</dbReference>
<dbReference type="GO" id="GO:0006435">
    <property type="term" value="P:threonyl-tRNA aminoacylation"/>
    <property type="evidence" value="ECO:0007669"/>
    <property type="project" value="UniProtKB-UniRule"/>
</dbReference>
<dbReference type="CDD" id="cd00860">
    <property type="entry name" value="ThrRS_anticodon"/>
    <property type="match status" value="1"/>
</dbReference>
<dbReference type="CDD" id="cd00771">
    <property type="entry name" value="ThrRS_core"/>
    <property type="match status" value="1"/>
</dbReference>
<dbReference type="FunFam" id="3.30.54.20:FF:000003">
    <property type="entry name" value="Threonine--tRNA ligase"/>
    <property type="match status" value="1"/>
</dbReference>
<dbReference type="FunFam" id="3.30.930.10:FF:000019">
    <property type="entry name" value="Threonine--tRNA ligase"/>
    <property type="match status" value="1"/>
</dbReference>
<dbReference type="FunFam" id="3.40.50.800:FF:000001">
    <property type="entry name" value="Threonine--tRNA ligase"/>
    <property type="match status" value="1"/>
</dbReference>
<dbReference type="FunFam" id="3.30.980.10:FF:000005">
    <property type="entry name" value="Threonyl-tRNA synthetase, mitochondrial"/>
    <property type="match status" value="1"/>
</dbReference>
<dbReference type="Gene3D" id="3.30.54.20">
    <property type="match status" value="1"/>
</dbReference>
<dbReference type="Gene3D" id="3.40.50.800">
    <property type="entry name" value="Anticodon-binding domain"/>
    <property type="match status" value="1"/>
</dbReference>
<dbReference type="Gene3D" id="3.30.930.10">
    <property type="entry name" value="Bira Bifunctional Protein, Domain 2"/>
    <property type="match status" value="1"/>
</dbReference>
<dbReference type="Gene3D" id="3.30.980.10">
    <property type="entry name" value="Threonyl-trna Synthetase, Chain A, domain 2"/>
    <property type="match status" value="1"/>
</dbReference>
<dbReference type="HAMAP" id="MF_00184">
    <property type="entry name" value="Thr_tRNA_synth"/>
    <property type="match status" value="1"/>
</dbReference>
<dbReference type="InterPro" id="IPR002314">
    <property type="entry name" value="aa-tRNA-synt_IIb"/>
</dbReference>
<dbReference type="InterPro" id="IPR006195">
    <property type="entry name" value="aa-tRNA-synth_II"/>
</dbReference>
<dbReference type="InterPro" id="IPR045864">
    <property type="entry name" value="aa-tRNA-synth_II/BPL/LPL"/>
</dbReference>
<dbReference type="InterPro" id="IPR004154">
    <property type="entry name" value="Anticodon-bd"/>
</dbReference>
<dbReference type="InterPro" id="IPR036621">
    <property type="entry name" value="Anticodon-bd_dom_sf"/>
</dbReference>
<dbReference type="InterPro" id="IPR004095">
    <property type="entry name" value="TGS"/>
</dbReference>
<dbReference type="InterPro" id="IPR002320">
    <property type="entry name" value="Thr-tRNA-ligase_IIa"/>
</dbReference>
<dbReference type="InterPro" id="IPR018163">
    <property type="entry name" value="Thr/Ala-tRNA-synth_IIc_edit"/>
</dbReference>
<dbReference type="InterPro" id="IPR047246">
    <property type="entry name" value="ThrRS_anticodon"/>
</dbReference>
<dbReference type="InterPro" id="IPR033728">
    <property type="entry name" value="ThrRS_core"/>
</dbReference>
<dbReference type="InterPro" id="IPR012947">
    <property type="entry name" value="tRNA_SAD"/>
</dbReference>
<dbReference type="NCBIfam" id="TIGR00418">
    <property type="entry name" value="thrS"/>
    <property type="match status" value="1"/>
</dbReference>
<dbReference type="PANTHER" id="PTHR11451:SF44">
    <property type="entry name" value="THREONINE--TRNA LIGASE, CHLOROPLASTIC_MITOCHONDRIAL 2"/>
    <property type="match status" value="1"/>
</dbReference>
<dbReference type="PANTHER" id="PTHR11451">
    <property type="entry name" value="THREONINE-TRNA LIGASE"/>
    <property type="match status" value="1"/>
</dbReference>
<dbReference type="Pfam" id="PF03129">
    <property type="entry name" value="HGTP_anticodon"/>
    <property type="match status" value="1"/>
</dbReference>
<dbReference type="Pfam" id="PF00587">
    <property type="entry name" value="tRNA-synt_2b"/>
    <property type="match status" value="1"/>
</dbReference>
<dbReference type="Pfam" id="PF07973">
    <property type="entry name" value="tRNA_SAD"/>
    <property type="match status" value="1"/>
</dbReference>
<dbReference type="PRINTS" id="PR01047">
    <property type="entry name" value="TRNASYNTHTHR"/>
</dbReference>
<dbReference type="SMART" id="SM00863">
    <property type="entry name" value="tRNA_SAD"/>
    <property type="match status" value="1"/>
</dbReference>
<dbReference type="SUPFAM" id="SSF52954">
    <property type="entry name" value="Class II aaRS ABD-related"/>
    <property type="match status" value="1"/>
</dbReference>
<dbReference type="SUPFAM" id="SSF55681">
    <property type="entry name" value="Class II aaRS and biotin synthetases"/>
    <property type="match status" value="1"/>
</dbReference>
<dbReference type="SUPFAM" id="SSF55186">
    <property type="entry name" value="ThrRS/AlaRS common domain"/>
    <property type="match status" value="1"/>
</dbReference>
<dbReference type="PROSITE" id="PS50862">
    <property type="entry name" value="AA_TRNA_LIGASE_II"/>
    <property type="match status" value="1"/>
</dbReference>
<dbReference type="PROSITE" id="PS51880">
    <property type="entry name" value="TGS"/>
    <property type="match status" value="1"/>
</dbReference>
<organism>
    <name type="scientific">Mycobacteroides abscessus (strain ATCC 19977 / DSM 44196 / CCUG 20993 / CIP 104536 / JCM 13569 / NCTC 13031 / TMC 1543 / L948)</name>
    <name type="common">Mycobacterium abscessus</name>
    <dbReference type="NCBI Taxonomy" id="561007"/>
    <lineage>
        <taxon>Bacteria</taxon>
        <taxon>Bacillati</taxon>
        <taxon>Actinomycetota</taxon>
        <taxon>Actinomycetes</taxon>
        <taxon>Mycobacteriales</taxon>
        <taxon>Mycobacteriaceae</taxon>
        <taxon>Mycobacteroides</taxon>
        <taxon>Mycobacteroides abscessus</taxon>
    </lineage>
</organism>
<accession>B1MCK6</accession>
<keyword id="KW-0030">Aminoacyl-tRNA synthetase</keyword>
<keyword id="KW-0067">ATP-binding</keyword>
<keyword id="KW-0963">Cytoplasm</keyword>
<keyword id="KW-0436">Ligase</keyword>
<keyword id="KW-0479">Metal-binding</keyword>
<keyword id="KW-0547">Nucleotide-binding</keyword>
<keyword id="KW-0648">Protein biosynthesis</keyword>
<keyword id="KW-1185">Reference proteome</keyword>
<keyword id="KW-0694">RNA-binding</keyword>
<keyword id="KW-0820">tRNA-binding</keyword>
<keyword id="KW-0862">Zinc</keyword>
<sequence length="684" mass="76412">MTAPNPSSLVAPIRVPAGTTAGTAVREAGLPGKGEDAIVVVRVDGALKDLSWTPESDTEVEPVAANTEDGRSVIRHSAAHVLAQAVQELFPQAKLGIGPPITDGFYYDFGIDHAFTPEDLTALEKKMKQIIKEGQRFSRRVYESVEEAQAELANEPFKLELVSDKSGADDPEVMEVGGDELSAYDNLNPRTGEREWFDLCRGPHIPTTKHIPAFRLTRSSAAYWRGNQANASMQRVYGTAWESQEALDKHLELLEEAQRRDHRKLGVELDLFSFPDEIGSGLPVFHPKGGIVRKELEDYSRAKHTAAGYEFVNTPHITKENLYQTSGHLDWYSDGMFPPMHIDAELNEDGTVRKPGQNYYLKPMNCPMHHLIYRARGRSYRELPLRLFEFGSVYRYEKSGVVHGLTRVRGMTQDDAHIYTTREQMHEELTSLLRFVLDLLSDYGLDDFYLELSTKDEAKFVGSDEVWEEATKTLEQVALDSGLQLVPDPGGAAFYGPKISVQAKDALGRSWQMSTIQLDFNMPERFNLEYTAADGTRKQPVLIHRALFGSIERFFGVLTEHYAGAFPAWLSPVQAVGIPIADAHAPYLNDIVSQLKAQGIRAEVDSSDDRMNKKIVNHTNQRVPFLLLAGDRDVEAGAVSFRFRDRTQVNGVPRDEAVAAIVDWVNRRENVSPTAELLKLGASD</sequence>
<evidence type="ECO:0000255" key="1">
    <source>
        <dbReference type="HAMAP-Rule" id="MF_00184"/>
    </source>
</evidence>
<evidence type="ECO:0000255" key="2">
    <source>
        <dbReference type="PROSITE-ProRule" id="PRU01228"/>
    </source>
</evidence>
<proteinExistence type="inferred from homology"/>
<feature type="chain" id="PRO_1000098586" description="Threonine--tRNA ligase">
    <location>
        <begin position="1"/>
        <end position="684"/>
    </location>
</feature>
<feature type="domain" description="TGS" evidence="2">
    <location>
        <begin position="1"/>
        <end position="64"/>
    </location>
</feature>
<feature type="region of interest" description="Catalytic" evidence="1">
    <location>
        <begin position="261"/>
        <end position="567"/>
    </location>
</feature>
<feature type="binding site" evidence="1">
    <location>
        <position position="366"/>
    </location>
    <ligand>
        <name>Zn(2+)</name>
        <dbReference type="ChEBI" id="CHEBI:29105"/>
    </ligand>
</feature>
<feature type="binding site" evidence="1">
    <location>
        <position position="417"/>
    </location>
    <ligand>
        <name>Zn(2+)</name>
        <dbReference type="ChEBI" id="CHEBI:29105"/>
    </ligand>
</feature>
<feature type="binding site" evidence="1">
    <location>
        <position position="544"/>
    </location>
    <ligand>
        <name>Zn(2+)</name>
        <dbReference type="ChEBI" id="CHEBI:29105"/>
    </ligand>
</feature>
<comment type="function">
    <text evidence="1">Catalyzes the attachment of threonine to tRNA(Thr) in a two-step reaction: L-threonine is first activated by ATP to form Thr-AMP and then transferred to the acceptor end of tRNA(Thr). Also edits incorrectly charged L-seryl-tRNA(Thr).</text>
</comment>
<comment type="catalytic activity">
    <reaction evidence="1">
        <text>tRNA(Thr) + L-threonine + ATP = L-threonyl-tRNA(Thr) + AMP + diphosphate + H(+)</text>
        <dbReference type="Rhea" id="RHEA:24624"/>
        <dbReference type="Rhea" id="RHEA-COMP:9670"/>
        <dbReference type="Rhea" id="RHEA-COMP:9704"/>
        <dbReference type="ChEBI" id="CHEBI:15378"/>
        <dbReference type="ChEBI" id="CHEBI:30616"/>
        <dbReference type="ChEBI" id="CHEBI:33019"/>
        <dbReference type="ChEBI" id="CHEBI:57926"/>
        <dbReference type="ChEBI" id="CHEBI:78442"/>
        <dbReference type="ChEBI" id="CHEBI:78534"/>
        <dbReference type="ChEBI" id="CHEBI:456215"/>
        <dbReference type="EC" id="6.1.1.3"/>
    </reaction>
</comment>
<comment type="cofactor">
    <cofactor evidence="1">
        <name>Zn(2+)</name>
        <dbReference type="ChEBI" id="CHEBI:29105"/>
    </cofactor>
    <text evidence="1">Binds 1 zinc ion per subunit.</text>
</comment>
<comment type="subunit">
    <text evidence="1">Homodimer.</text>
</comment>
<comment type="subcellular location">
    <subcellularLocation>
        <location evidence="1">Cytoplasm</location>
    </subcellularLocation>
</comment>
<comment type="similarity">
    <text evidence="1">Belongs to the class-II aminoacyl-tRNA synthetase family.</text>
</comment>
<gene>
    <name evidence="1" type="primary">thrS</name>
    <name type="ordered locus">MAB_2898c</name>
</gene>
<protein>
    <recommendedName>
        <fullName evidence="1">Threonine--tRNA ligase</fullName>
        <ecNumber evidence="1">6.1.1.3</ecNumber>
    </recommendedName>
    <alternativeName>
        <fullName evidence="1">Threonyl-tRNA synthetase</fullName>
        <shortName evidence="1">ThrRS</shortName>
    </alternativeName>
</protein>